<comment type="function">
    <text evidence="1 4 5 8 9 10 14 15 16 17 18 19 21 22 25 26 27 28">Calcium-activated chloride channel (CaCC) (PubMed:18724360, PubMed:22002868, PubMed:22634729, PubMed:23840801, PubMed:24913262, PubMed:25779870, PubMed:28561733, PubMed:28963502, PubMed:29236684, PubMed:29236691, PubMed:31147466, PubMed:34089532, PubMed:34433575, PubMed:35135993). Plays a role in transepithelial anion transport and smooth muscle contraction (PubMed:28561733, PubMed:29236684, PubMed:29236691). Required for the normal functioning of the interstitial cells of Cajal (ICCs) which generate electrical pacemaker activity in gastrointestinal smooth muscles. Acts as a major contributor to basal and stimulated chloride conductance in airway epithelial cells and plays an important role in tracheal cartilage development. Required for CFTR activation by enhancing endoplasmic reticulum Ca(2+) store release and is also required for CFTR membrane expression (By similarity). Required for basal and ATP-dependent mucus secretion in airways and intestine, probably by controlling exocytosis of mucus-filled granules by providing Ca(2+) to an apical signaling compartment (PubMed:30586313). Contributes to airway mucus expression induced by interleukins IL3 and IL8 and by the asthma-associated protein CLCA1 and is required for expression of mucin MUC5AC (By similarity). However, was shown in another study not to be required for MUC5AC expression (By similarity). Plays a role in the propagation of Ca(2+) waves in Kolliker's organ in the cochlea and contributes to the refinement of auditory brainstem circuitries prior to hearing onset (PubMed:35129434). In vomeronasal sensory neurons, modulates spontaneous firing patterns in the absence of stimuli as well as the firing pattern of pheromone-evoked activity (PubMed:34433575). Responsible for calcium-activated chloride channel activity in type I taste cells of the vallate papillae (PubMed:34089532). Acts as a heat sensor in nociceptive neurons (PubMed:22634729). In dorsal root ganglion neurons, plays a role in mediating non-histaminergic Mas-related G-protein coupled receptor (MRGPR)-dependent itching, acting as a downstream effector of MRGPRs (PubMed:35135993). In the developing brain, required for the Ca(2+)-dependent process extension of radial glial cells (PubMed:31147466).</text>
</comment>
<comment type="catalytic activity">
    <reaction evidence="15 16 17 18 19 28">
        <text>chloride(in) = chloride(out)</text>
        <dbReference type="Rhea" id="RHEA:29823"/>
        <dbReference type="ChEBI" id="CHEBI:17996"/>
    </reaction>
</comment>
<comment type="activity regulation">
    <text evidence="1 10 22">ATP and calmodulin are essential for its activation. Channel activity is inhibited by CFTR protein and by chloride inhibitors such as niflumic acid (NFA) and 4,4'-diisothiocyanatostilbene-2,2'-disulfonic acid (DIDS) (By similarity). Activated by heat with activation seen at temperatures above 44 degrees Celsius (PubMed:22634729). Activated by BDNF in radial glial cells (PubMed:31147466).</text>
</comment>
<comment type="subunit">
    <text evidence="1 13 16 18 19">Homodimer (PubMed:28561733, PubMed:29236684, PubMed:29236691). Interacts with CFTR (By similarity). Interacts with TRPV4 (PubMed:24509911).</text>
</comment>
<comment type="interaction">
    <interactant intactId="EBI-11795280">
        <id>Q8BHY3</id>
    </interactant>
    <interactant intactId="EBI-11795280">
        <id>Q8BHY3</id>
        <label>Ano1</label>
    </interactant>
    <organismsDiffer>false</organismsDiffer>
    <experiments>2</experiments>
</comment>
<comment type="subcellular location">
    <subcellularLocation>
        <location evidence="4 9 14 16 18 19">Apical cell membrane</location>
        <topology evidence="16 18 19">Multi-pass membrane protein</topology>
    </subcellularLocation>
    <subcellularLocation>
        <location evidence="12">Presynapse</location>
    </subcellularLocation>
    <text evidence="1 12">In differentiating airway epithelial cells, predominantly intracellular at day 0 but is apically localized by day 30 (By similarity). Expressed in the presynapse of retinal neurons (PubMed:23840801).</text>
</comment>
<comment type="alternative products">
    <event type="alternative splicing"/>
    <isoform>
        <id>Q8BHY3-1</id>
        <name>1</name>
        <sequence type="displayed"/>
    </isoform>
    <isoform>
        <id>Q8BHY3-2</id>
        <name>2</name>
        <sequence type="described" ref="VSP_025672"/>
    </isoform>
</comment>
<comment type="tissue specificity">
    <text evidence="4 5 7 10 12 14 15 22 23 25 26 28">Expressed at the apical surface of the vomeronasal epithelium (at protein level) (PubMed:25779870, PubMed:34433575). Expressed in the lateral and septal nasal glands (at protein level) (PubMed:25779870). Highly expressed in pulmonary bronchiole epithelial cells, pancreatic and submandibular gland acinar cells, kidney proximal tubule, all retinal cell layers, most sensory cells of dorsal root ganglia, Leydig cells and spermatocytes (at protein level). In the dorsal root ganglia, detected in small-diameter nociceptive neurons and in larger myelinated neurons (at protein level) (PubMed:22634729). In the dorsal root ganglia, expressed in MrgprA3-positive neurons (at protein level) (PubMed:35135993). In the developing brain, highly expressed in the ventricular zone and subventricular zone at 12.5 dpc and 14.5 dpc where it is detected in radial glial cells but not in neurons with expression dramatically decreased at P1 (at protein level) (PubMed:31147466). Highly expressed in the endometrial stroma (at protein level) (PubMed:31175367). In taste buds of the vallate papillae, expressed in the apical region of type I taste cells (at protein level) (PubMed:34089532). In the kidney, expressed in the collecting duct (at protein level) (PubMed:24913262). In the retina, strongly expressed in the outer and inner plexiform layers, weakly expressed in some somata in the inner nuclear layer and ganglion cell layer and not expressed in the outer nuclear layer (at protein level) (PubMed:23840801). Expressed in various retinal neurons including rod bipolar cells (at protein level) (PubMed:23840801). Expressed in eye, brain, myometrium and endometrium with higher levels in endometrium than myometrium in estrus and day 18 pregnant mice (PubMed:31175367). Not detected in uterine smooth muscle cells (PubMed:31175367). Expressed at high levels in the thyroid gland and gastrointestinal muscles.</text>
</comment>
<comment type="developmental stage">
    <text evidence="6">In the developing respiratory system, expressed in epithelium of trachea and lung at 12.5 dpc and 14.5 dpc but not detected in distal epithelial tips. Expressed in the mesenchyme adjacent to the proximal conducting airway epithelium at 14.5 dpc but not at 16.5 dpc. Epithelial expression persists at 16.5 dpc. At 18.5 dpc, high levels detected only in epithelial cells of terminal sacules. In the developing gastrointestinal tract, expressed in the esophageal mesenchyme and epithelium of posterior stomach and intestine. In the developing skeleton, expressed in the perichondria of the neural arch of developing vertebrae at 14.5 dpc and 16.5 dpc. In developing skin, expression is restricted to basal layers of the epidermis at 16.5 dpc.</text>
</comment>
<comment type="domain">
    <text>The region spanning the fifth and sixth transmembrane domains probably forms the pore-forming region.</text>
</comment>
<comment type="disruption phenotype">
    <text evidence="4 5 10 15 17 20 21 22 23 26 27 28">Mice display severe tracheomalacia with gaps in the tracheal cartilage rings along the entire length of the trachea (PubMed:18585372). 90% of mutants die within the first nine days of postnatal life and no mutants survive longer than 30 days postpartum (PubMed:18585372). Embryonic radial glial cells exhibit significantly shorter processes and mutant embryos display abnormal cortical organization and decreased cortical thickness (PubMed:31147466). Conditional knockout in mature vomeronasal sensory neurons abolishes calcium-activated chloride currents but does not affect Tmem16b expression or glomerular development in the accessory olfactory bulb (PubMed:25779870, PubMed:34433575). Conditional knockout in intestinal and respiratory epithelial cells abolishes both calcium-activated chloride channel activity and CFTR-dependent chloride secretion (PubMed:28963502). Conditional knockout in ciliated airway epithelial cells results in inhibition of basal airway mucus secretion with accumulation of mucus in airway club cells (PubMed:30586313). Conditional knockout in intestinal epithelial cells results in accumulation of mucus in both large and small intestinal goblet cells (PubMed:30586313). Conditional knockout in Syn1-expressing cells results in impaired social behavior, depressive-like behavior and decreased weight but does not affect locomotor activity, cognitive function or motor coordination (PubMed:29928889). Conditional knockout in dorsal root ganglion neurons results in reduction of heat-sensitive Cl- currents and a pronounced analgesic effect in response to heat (PubMed:22634729). Conditional knockout in dorsal root ganglion neurons results in reduced Mas-related G-protein coupled receptor-dependent itching (PubMed:35135993). Conditional knockout in the inner ear does not affect morphological development of the organ of Corti but impairs pre-hearing cochlear activity and spontaneous burst firing as well as sensitivity and frequency selectivity of sound-evoked firing of neurons of the medial nucleus of the trapezoid body (MNTB) (PubMed:35129434). Conditional knockout in smooth muscle cells does not alter Ca2+ signaling, uterine contraction, gestation length, or litter size (PubMed:31175367). RNAi-mediated knockdown reduces calcium-activated chloride currents and saliva production (PubMed:18724360). RNAi-mediated knockdown results in a pronounced analgesic effect in response to heat (PubMed:22634729).</text>
</comment>
<comment type="miscellaneous">
    <text evidence="31">The term 'anoctamin' was coined because these channels are anion selective and are predicted to have eight (OCT) transmembrane segments. There is some dissatisfaction in the field with the Ano nomenclature because it is not certain that all the members of this family are anion channels or have the 8-transmembrane topology.</text>
</comment>
<comment type="similarity">
    <text evidence="31">Belongs to the anoctamin family.</text>
</comment>
<comment type="caution">
    <text evidence="16 18 19">Contains ten transmembrane regions, not eight as predicted.</text>
</comment>
<comment type="sequence caution" evidence="31">
    <conflict type="erroneous initiation">
        <sequence resource="EMBL-CDS" id="AAH06062"/>
    </conflict>
    <text>Truncated N-terminus.</text>
</comment>
<comment type="sequence caution" evidence="31">
    <conflict type="erroneous initiation">
        <sequence resource="EMBL-CDS" id="BAC26230"/>
    </conflict>
    <text>Truncated N-terminus.</text>
</comment>
<comment type="sequence caution" evidence="31">
    <conflict type="erroneous initiation">
        <sequence resource="EMBL-CDS" id="BAC26398"/>
    </conflict>
    <text>Truncated N-terminus.</text>
</comment>
<comment type="sequence caution" evidence="31">
    <conflict type="erroneous translation">
        <sequence resource="EMBL-CDS" id="BAC35051"/>
    </conflict>
    <text>Wrong choice of frame.</text>
</comment>
<proteinExistence type="evidence at protein level"/>
<name>ANO1_MOUSE</name>
<gene>
    <name type="primary">Ano1</name>
    <name type="synonym">Tmem16a</name>
</gene>
<reference key="1">
    <citation type="journal article" date="2008" name="Nature">
        <title>TMEM16A confers receptor-activated calcium-dependent chloride conductance.</title>
        <authorList>
            <person name="Yang Y.D."/>
            <person name="Cho H."/>
            <person name="Koo J.Y."/>
            <person name="Tak M.H."/>
            <person name="Cho Y."/>
            <person name="Shim W.-S."/>
            <person name="Park S.P."/>
            <person name="Lee J."/>
            <person name="Lee B."/>
            <person name="Kim B.-M."/>
            <person name="Raouf R."/>
            <person name="Shin Y.K."/>
            <person name="Oh U."/>
        </authorList>
    </citation>
    <scope>NUCLEOTIDE SEQUENCE [MRNA] (ISOFORM 1)</scope>
    <scope>FUNCTION</scope>
    <scope>TRANSPORTER ACTIVITY</scope>
    <scope>TISSUE SPECIFICITY</scope>
    <scope>PORE-FORMING REGION</scope>
    <scope>DISRUPTION PHENOTYPE</scope>
    <scope>MUTAGENESIS OF ARG-621; CYS-625; CYS-630; CYS-635; LYS-645 AND LYS-668</scope>
</reference>
<reference key="2">
    <citation type="journal article" date="2005" name="Science">
        <title>The transcriptional landscape of the mammalian genome.</title>
        <authorList>
            <person name="Carninci P."/>
            <person name="Kasukawa T."/>
            <person name="Katayama S."/>
            <person name="Gough J."/>
            <person name="Frith M.C."/>
            <person name="Maeda N."/>
            <person name="Oyama R."/>
            <person name="Ravasi T."/>
            <person name="Lenhard B."/>
            <person name="Wells C."/>
            <person name="Kodzius R."/>
            <person name="Shimokawa K."/>
            <person name="Bajic V.B."/>
            <person name="Brenner S.E."/>
            <person name="Batalov S."/>
            <person name="Forrest A.R."/>
            <person name="Zavolan M."/>
            <person name="Davis M.J."/>
            <person name="Wilming L.G."/>
            <person name="Aidinis V."/>
            <person name="Allen J.E."/>
            <person name="Ambesi-Impiombato A."/>
            <person name="Apweiler R."/>
            <person name="Aturaliya R.N."/>
            <person name="Bailey T.L."/>
            <person name="Bansal M."/>
            <person name="Baxter L."/>
            <person name="Beisel K.W."/>
            <person name="Bersano T."/>
            <person name="Bono H."/>
            <person name="Chalk A.M."/>
            <person name="Chiu K.P."/>
            <person name="Choudhary V."/>
            <person name="Christoffels A."/>
            <person name="Clutterbuck D.R."/>
            <person name="Crowe M.L."/>
            <person name="Dalla E."/>
            <person name="Dalrymple B.P."/>
            <person name="de Bono B."/>
            <person name="Della Gatta G."/>
            <person name="di Bernardo D."/>
            <person name="Down T."/>
            <person name="Engstrom P."/>
            <person name="Fagiolini M."/>
            <person name="Faulkner G."/>
            <person name="Fletcher C.F."/>
            <person name="Fukushima T."/>
            <person name="Furuno M."/>
            <person name="Futaki S."/>
            <person name="Gariboldi M."/>
            <person name="Georgii-Hemming P."/>
            <person name="Gingeras T.R."/>
            <person name="Gojobori T."/>
            <person name="Green R.E."/>
            <person name="Gustincich S."/>
            <person name="Harbers M."/>
            <person name="Hayashi Y."/>
            <person name="Hensch T.K."/>
            <person name="Hirokawa N."/>
            <person name="Hill D."/>
            <person name="Huminiecki L."/>
            <person name="Iacono M."/>
            <person name="Ikeo K."/>
            <person name="Iwama A."/>
            <person name="Ishikawa T."/>
            <person name="Jakt M."/>
            <person name="Kanapin A."/>
            <person name="Katoh M."/>
            <person name="Kawasawa Y."/>
            <person name="Kelso J."/>
            <person name="Kitamura H."/>
            <person name="Kitano H."/>
            <person name="Kollias G."/>
            <person name="Krishnan S.P."/>
            <person name="Kruger A."/>
            <person name="Kummerfeld S.K."/>
            <person name="Kurochkin I.V."/>
            <person name="Lareau L.F."/>
            <person name="Lazarevic D."/>
            <person name="Lipovich L."/>
            <person name="Liu J."/>
            <person name="Liuni S."/>
            <person name="McWilliam S."/>
            <person name="Madan Babu M."/>
            <person name="Madera M."/>
            <person name="Marchionni L."/>
            <person name="Matsuda H."/>
            <person name="Matsuzawa S."/>
            <person name="Miki H."/>
            <person name="Mignone F."/>
            <person name="Miyake S."/>
            <person name="Morris K."/>
            <person name="Mottagui-Tabar S."/>
            <person name="Mulder N."/>
            <person name="Nakano N."/>
            <person name="Nakauchi H."/>
            <person name="Ng P."/>
            <person name="Nilsson R."/>
            <person name="Nishiguchi S."/>
            <person name="Nishikawa S."/>
            <person name="Nori F."/>
            <person name="Ohara O."/>
            <person name="Okazaki Y."/>
            <person name="Orlando V."/>
            <person name="Pang K.C."/>
            <person name="Pavan W.J."/>
            <person name="Pavesi G."/>
            <person name="Pesole G."/>
            <person name="Petrovsky N."/>
            <person name="Piazza S."/>
            <person name="Reed J."/>
            <person name="Reid J.F."/>
            <person name="Ring B.Z."/>
            <person name="Ringwald M."/>
            <person name="Rost B."/>
            <person name="Ruan Y."/>
            <person name="Salzberg S.L."/>
            <person name="Sandelin A."/>
            <person name="Schneider C."/>
            <person name="Schoenbach C."/>
            <person name="Sekiguchi K."/>
            <person name="Semple C.A."/>
            <person name="Seno S."/>
            <person name="Sessa L."/>
            <person name="Sheng Y."/>
            <person name="Shibata Y."/>
            <person name="Shimada H."/>
            <person name="Shimada K."/>
            <person name="Silva D."/>
            <person name="Sinclair B."/>
            <person name="Sperling S."/>
            <person name="Stupka E."/>
            <person name="Sugiura K."/>
            <person name="Sultana R."/>
            <person name="Takenaka Y."/>
            <person name="Taki K."/>
            <person name="Tammoja K."/>
            <person name="Tan S.L."/>
            <person name="Tang S."/>
            <person name="Taylor M.S."/>
            <person name="Tegner J."/>
            <person name="Teichmann S.A."/>
            <person name="Ueda H.R."/>
            <person name="van Nimwegen E."/>
            <person name="Verardo R."/>
            <person name="Wei C.L."/>
            <person name="Yagi K."/>
            <person name="Yamanishi H."/>
            <person name="Zabarovsky E."/>
            <person name="Zhu S."/>
            <person name="Zimmer A."/>
            <person name="Hide W."/>
            <person name="Bult C."/>
            <person name="Grimmond S.M."/>
            <person name="Teasdale R.D."/>
            <person name="Liu E.T."/>
            <person name="Brusic V."/>
            <person name="Quackenbush J."/>
            <person name="Wahlestedt C."/>
            <person name="Mattick J.S."/>
            <person name="Hume D.A."/>
            <person name="Kai C."/>
            <person name="Sasaki D."/>
            <person name="Tomaru Y."/>
            <person name="Fukuda S."/>
            <person name="Kanamori-Katayama M."/>
            <person name="Suzuki M."/>
            <person name="Aoki J."/>
            <person name="Arakawa T."/>
            <person name="Iida J."/>
            <person name="Imamura K."/>
            <person name="Itoh M."/>
            <person name="Kato T."/>
            <person name="Kawaji H."/>
            <person name="Kawagashira N."/>
            <person name="Kawashima T."/>
            <person name="Kojima M."/>
            <person name="Kondo S."/>
            <person name="Konno H."/>
            <person name="Nakano K."/>
            <person name="Ninomiya N."/>
            <person name="Nishio T."/>
            <person name="Okada M."/>
            <person name="Plessy C."/>
            <person name="Shibata K."/>
            <person name="Shiraki T."/>
            <person name="Suzuki S."/>
            <person name="Tagami M."/>
            <person name="Waki K."/>
            <person name="Watahiki A."/>
            <person name="Okamura-Oho Y."/>
            <person name="Suzuki H."/>
            <person name="Kawai J."/>
            <person name="Hayashizaki Y."/>
        </authorList>
    </citation>
    <scope>NUCLEOTIDE SEQUENCE [LARGE SCALE MRNA] (ISOFORM 1)</scope>
    <source>
        <strain>C57BL/6J</strain>
        <tissue>Head</tissue>
        <tissue>Kidney</tissue>
        <tissue>Skin</tissue>
    </source>
</reference>
<reference key="3">
    <citation type="journal article" date="2004" name="Genome Res.">
        <title>The status, quality, and expansion of the NIH full-length cDNA project: the Mammalian Gene Collection (MGC).</title>
        <authorList>
            <consortium name="The MGC Project Team"/>
        </authorList>
    </citation>
    <scope>NUCLEOTIDE SEQUENCE [LARGE SCALE MRNA] (ISOFORM 2)</scope>
    <source>
        <strain>C57BL/6J</strain>
        <strain>Czech II</strain>
        <tissue>Eye</tissue>
        <tissue>Mammary tumor</tissue>
    </source>
</reference>
<reference key="4">
    <citation type="journal article" date="2008" name="Dev. Biol.">
        <title>The transmembrane protein TMEM16A is required for normal development of the murine trachea.</title>
        <authorList>
            <person name="Rock J.R."/>
            <person name="Futtner C.R."/>
            <person name="Harfe B.D."/>
        </authorList>
    </citation>
    <scope>FUNCTION</scope>
    <scope>SUBCELLULAR LOCATION</scope>
    <scope>TISSUE SPECIFICITY</scope>
    <scope>DISRUPTION PHENOTYPE</scope>
</reference>
<reference key="5">
    <citation type="journal article" date="2008" name="Dev. Dyn.">
        <title>Expression of TMEM16 paralogs during murine embryogenesis.</title>
        <authorList>
            <person name="Rock J.R."/>
            <person name="Harfe B.D."/>
        </authorList>
    </citation>
    <scope>DEVELOPMENTAL STAGE</scope>
</reference>
<reference key="6">
    <citation type="journal article" date="2010" name="Cell">
        <title>A tissue-specific atlas of mouse protein phosphorylation and expression.</title>
        <authorList>
            <person name="Huttlin E.L."/>
            <person name="Jedrychowski M.P."/>
            <person name="Elias J.E."/>
            <person name="Goswami T."/>
            <person name="Rad R."/>
            <person name="Beausoleil S.A."/>
            <person name="Villen J."/>
            <person name="Haas W."/>
            <person name="Sowa M.E."/>
            <person name="Gygi S.P."/>
        </authorList>
    </citation>
    <scope>IDENTIFICATION BY MASS SPECTROMETRY [LARGE SCALE ANALYSIS]</scope>
    <source>
        <tissue>Brown adipose tissue</tissue>
        <tissue>Lung</tissue>
        <tissue>Testis</tissue>
    </source>
</reference>
<reference key="7">
    <citation type="journal article" date="2010" name="J. Biol. Chem.">
        <title>Expression and function of epithelial anoctamins.</title>
        <authorList>
            <person name="Schreiber R."/>
            <person name="Uliyakina I."/>
            <person name="Kongsuphol P."/>
            <person name="Warth R."/>
            <person name="Mirza M."/>
            <person name="Martins J.R."/>
            <person name="Kunzelmann K."/>
        </authorList>
    </citation>
    <scope>TISSUE SPECIFICITY</scope>
</reference>
<reference key="8">
    <citation type="journal article" date="2012" name="Am. J. Physiol.">
        <title>ANOs 3-7 in the anoctamin/Tmem16 Cl- channel family are intracellular proteins.</title>
        <authorList>
            <person name="Duran C."/>
            <person name="Qu Z."/>
            <person name="Osunkoya A.O."/>
            <person name="Cui Y."/>
            <person name="Hartzell H.C."/>
        </authorList>
    </citation>
    <scope>FUNCTION</scope>
    <scope>SUBCELLULAR LOCATION</scope>
</reference>
<reference key="9">
    <citation type="journal article" date="2012" name="Cell">
        <title>TMEM16F forms a Ca(2+)-activated cation channel required for lipid scrambling in platelets during blood coagulation.</title>
        <authorList>
            <person name="Yang H."/>
            <person name="Kim A."/>
            <person name="David T."/>
            <person name="Palmer D."/>
            <person name="Jin T."/>
            <person name="Tien J."/>
            <person name="Huang F."/>
            <person name="Cheng T."/>
            <person name="Coughlin S.R."/>
            <person name="Jan Y.N."/>
            <person name="Jan L.Y."/>
        </authorList>
    </citation>
    <scope>MUTAGENESIS OF LYS-588</scope>
</reference>
<reference key="10">
    <citation type="journal article" date="2012" name="Exp. Physiol.">
        <title>Anoctamins and gastrointestinal smooth muscle excitability.</title>
        <authorList>
            <person name="Sanders K.M."/>
            <person name="Zhu M.H."/>
            <person name="Britton F."/>
            <person name="Koh S.D."/>
            <person name="Ward S.M."/>
        </authorList>
    </citation>
    <scope>REVIEW</scope>
    <scope>FUNCTION</scope>
</reference>
<reference key="11">
    <citation type="journal article" date="2012" name="Nat. Neurosci.">
        <title>The calcium-activated chloride channel anoctamin 1 acts as a heat sensor in nociceptive neurons.</title>
        <authorList>
            <person name="Cho H."/>
            <person name="Yang Y.D."/>
            <person name="Lee J."/>
            <person name="Lee B."/>
            <person name="Kim T."/>
            <person name="Jang Y."/>
            <person name="Back S.K."/>
            <person name="Na H.S."/>
            <person name="Harfe B.D."/>
            <person name="Wang F."/>
            <person name="Raouf R."/>
            <person name="Wood J.N."/>
            <person name="Oh U."/>
        </authorList>
    </citation>
    <scope>FUNCTION</scope>
    <scope>TRANSPORTER ACTIVITY</scope>
    <scope>ACTIVITY REGULATION</scope>
    <scope>TISSUE SPECIFICITY</scope>
    <scope>DISRUPTION PHENOTYPE</scope>
</reference>
<reference key="12">
    <citation type="journal article" date="2013" name="PLoS ONE">
        <title>Presynaptic Localization and Possible Function of Calcium-Activated Chloride Channel Anoctamin 1 in the Mammalian Retina.</title>
        <authorList>
            <person name="Jeon J.H."/>
            <person name="Paik S.S."/>
            <person name="Chun M.H."/>
            <person name="Oh U."/>
            <person name="Kim I.B."/>
        </authorList>
    </citation>
    <scope>FUNCTION</scope>
    <scope>TRANSPORTER ACTIVITY</scope>
    <scope>SUBCELLULAR LOCATION</scope>
    <scope>TISSUE SPECIFICITY</scope>
</reference>
<reference key="13">
    <citation type="journal article" date="2014" name="Acta Physiol.">
        <title>TMEM16A is a Ca(2+) -activated Cl(-) channel expressed in the renal collecting duct.</title>
        <authorList>
            <person name="Svenningsen P."/>
            <person name="Nielsen M.R."/>
            <person name="Marcussen N."/>
            <person name="Walter S."/>
            <person name="Jensen B.L."/>
        </authorList>
    </citation>
    <scope>FUNCTION</scope>
    <scope>SUBCELLULAR LOCATION</scope>
    <scope>TISSUE SPECIFICITY</scope>
</reference>
<reference key="14">
    <citation type="journal article" date="2014" name="FASEB J.">
        <title>Modulation of water efflux through functional interaction between TRPV4 and TMEM16A/anoctamin 1.</title>
        <authorList>
            <person name="Takayama Y."/>
            <person name="Shibasaki K."/>
            <person name="Suzuki Y."/>
            <person name="Yamanaka A."/>
            <person name="Tominaga M."/>
        </authorList>
    </citation>
    <scope>INTERACTION WITH TRPV4</scope>
</reference>
<reference key="15">
    <citation type="journal article" date="2015" name="J. Gen. Physiol.">
        <title>Conditional knockout of TMEM16A/anoctamin1 abolishes the calcium-activated chloride current in mouse vomeronasal sensory neurons.</title>
        <authorList>
            <person name="Amjad A."/>
            <person name="Hernandez-Clavijo A."/>
            <person name="Pifferi S."/>
            <person name="Maurya D.K."/>
            <person name="Boccaccio A."/>
            <person name="Franzot J."/>
            <person name="Rock J."/>
            <person name="Menini A."/>
        </authorList>
    </citation>
    <scope>FUNCTION</scope>
    <scope>TRANSPORTER ACTIVITY</scope>
    <scope>TISSUE SPECIFICITY</scope>
    <scope>DISRUPTION PHENOTYPE</scope>
</reference>
<reference key="16">
    <citation type="journal article" date="2017" name="Sci. Rep.">
        <title>Epithelial Chloride Transport by CFTR Requires TMEM16A.</title>
        <authorList>
            <person name="Benedetto R."/>
            <person name="Ousingsawat J."/>
            <person name="Wanitchakool P."/>
            <person name="Zhang Y."/>
            <person name="Holtzman M.J."/>
            <person name="Amaral M."/>
            <person name="Rock J.R."/>
            <person name="Schreiber R."/>
            <person name="Kunzelmann K."/>
        </authorList>
    </citation>
    <scope>FUNCTION</scope>
    <scope>TRANSPORTER ACTIVITY</scope>
    <scope>DISRUPTION PHENOTYPE</scope>
</reference>
<reference key="17">
    <citation type="journal article" date="2018" name="Life Sci.">
        <title>Comprehensive behavioral analyses of anoctamin1/TMEM16A-conditional knockout mice.</title>
        <authorList>
            <person name="Seo K.H."/>
            <person name="Jin Y."/>
            <person name="Jung S.Y."/>
            <person name="Lee S.H."/>
        </authorList>
    </citation>
    <scope>DISRUPTION PHENOTYPE</scope>
</reference>
<reference key="18">
    <citation type="journal article" date="2019" name="Life Sci.">
        <authorList>
            <person name="Seo K.H."/>
            <person name="Jin Y."/>
            <person name="Jung S.Y."/>
            <person name="Lee S.H."/>
        </authorList>
    </citation>
    <scope>ERRATUM OF PUBMED:29928889</scope>
</reference>
<reference key="19">
    <citation type="journal article" date="2019" name="Biol. Reprod.">
        <title>Smooth muscle cell-specific TMEM16A deletion does not alter Ca2+ signaling, uterine contraction, gestation length, or litter size in mice.</title>
        <authorList>
            <person name="Qu M."/>
            <person name="Lu P."/>
            <person name="Bellve K."/>
            <person name="Fogarty K."/>
            <person name="Lifshitz L."/>
            <person name="Shi F."/>
            <person name="Zhuge R."/>
        </authorList>
    </citation>
    <scope>TISSUE SPECIFICITY</scope>
    <scope>DISRUPTION PHENOTYPE</scope>
</reference>
<reference key="20">
    <citation type="journal article" date="2019" name="FASEB J.">
        <title>TMEM16A is indispensable for basal mucus secretion in airways and intestine.</title>
        <authorList>
            <person name="Benedetto R."/>
            <person name="Cabrita I."/>
            <person name="Schreiber R."/>
            <person name="Kunzelmann K."/>
        </authorList>
    </citation>
    <scope>FUNCTION</scope>
    <scope>DISRUPTION PHENOTYPE</scope>
</reference>
<reference key="21">
    <citation type="journal article" date="2019" name="Proc. Natl. Acad. Sci. U.S.A.">
        <title>ANO1/TMEM16A regulates process maturation in radial glial cells in the developing brain.</title>
        <authorList>
            <person name="Hong G.S."/>
            <person name="Lee S.H."/>
            <person name="Lee B."/>
            <person name="Choi J.H."/>
            <person name="Oh S.J."/>
            <person name="Jang Y."/>
            <person name="Hwang E.M."/>
            <person name="Kim H."/>
            <person name="Jung J."/>
            <person name="Kim I.B."/>
            <person name="Oh U."/>
        </authorList>
    </citation>
    <scope>FUNCTION</scope>
    <scope>TRANSPORTER ACTIVITY</scope>
    <scope>ACTIVITY REGULATION</scope>
    <scope>TISSUE SPECIFICITY</scope>
    <scope>DISRUPTION PHENOTYPE</scope>
</reference>
<reference key="22">
    <citation type="journal article" date="2020" name="Cell Rep.">
        <title>An Additional Ca2+ Binding Site Allosterically Controls TMEM16A Activation.</title>
        <authorList>
            <person name="Le S.C."/>
            <person name="Yang H."/>
        </authorList>
    </citation>
    <scope>CALCIUM-BINDING</scope>
    <scope>MUTAGENESIS OF GLU-425; LYS-428; ASP-883 AND ASP-888</scope>
</reference>
<reference key="23">
    <citation type="journal article" date="2021" name="ENeuro">
        <title>TMEM16A and TMEM16B Modulate Pheromone-Evoked Action Potential Firing in Mouse Vomeronasal Sensory Neurons.</title>
        <authorList>
            <person name="Hernandez-Clavijo A."/>
            <person name="Sarno N."/>
            <person name="Gonzalez-Velandia K.Y."/>
            <person name="Degen R."/>
            <person name="Fleck D."/>
            <person name="Rock J.R."/>
            <person name="Spehr M."/>
            <person name="Menini A."/>
            <person name="Pifferi S."/>
        </authorList>
    </citation>
    <scope>FUNCTION</scope>
    <scope>TRANSPORTER ACTIVITY</scope>
    <scope>TISSUE SPECIFICITY</scope>
    <scope>DISRUPTION PHENOTYPE</scope>
</reference>
<reference key="24">
    <citation type="journal article" date="2021" name="J. Physiol. (Lond.)">
        <title>Functional expression of TMEM16A in taste bud cells.</title>
        <authorList>
            <person name="Guarascio D.M."/>
            <person name="Gonzalez-Velandia K.Y."/>
            <person name="Hernandez-Clavijo A."/>
            <person name="Menini A."/>
            <person name="Pifferi S."/>
        </authorList>
    </citation>
    <scope>FUNCTION</scope>
    <scope>TRANSPORTER ACTIVITY</scope>
    <scope>TISSUE SPECIFICITY</scope>
</reference>
<reference key="25">
    <citation type="journal article" date="2022" name="Elife">
        <title>The Cl--channel TMEM16A is involved in the generation of cochlear Ca2+ waves and promotes the refinement of auditory brainstem networks in mice.</title>
        <authorList>
            <person name="Maul A."/>
            <person name="Huebner A.K."/>
            <person name="Strenzke N."/>
            <person name="Moser T."/>
            <person name="Ruebsamen R."/>
            <person name="Jovanovic S."/>
            <person name="Huebner C.A."/>
        </authorList>
    </citation>
    <scope>FUNCTION</scope>
    <scope>TRANSPORTER ACTIVITY</scope>
    <scope>DISRUPTION PHENOTYPE</scope>
</reference>
<reference key="26">
    <citation type="journal article" date="2022" name="Pain">
        <title>Anoctamin 1/TMEM16A in pruritoceptors is essential for Mas-related G protein receptor-dependent itch.</title>
        <authorList>
            <person name="Kim H."/>
            <person name="Kim H."/>
            <person name="Cho H."/>
            <person name="Lee B."/>
            <person name="Lu H.J."/>
            <person name="Kim K."/>
            <person name="Chung S."/>
            <person name="Shim W.S."/>
            <person name="Shin Y.K."/>
            <person name="Dong X."/>
            <person name="Wood J.N."/>
            <person name="Oh U."/>
        </authorList>
    </citation>
    <scope>FUNCTION</scope>
    <scope>TRANSPORTER ACTIVITY</scope>
    <scope>TISSUE SPECIFICITY</scope>
    <scope>DISRUPTION PHENOTYPE</scope>
</reference>
<reference key="27">
    <citation type="journal article" date="2024" name="Elife">
        <title>TMEM16 and OSCA/TMEM63 proteins share a conserved potential to permeate ions and phospholipids.</title>
        <authorList>
            <person name="Lowry A.J."/>
            <person name="Liang P."/>
            <person name="Song M."/>
            <person name="Wan Y."/>
            <person name="Pei Z.M."/>
            <person name="Yang H."/>
            <person name="Zhang Y."/>
        </authorList>
    </citation>
    <scope>MUTAGENESIS OF ILE-550; ILE-551 AND GLU-555</scope>
</reference>
<reference evidence="33" key="28">
    <citation type="journal article" date="2017" name="Elife">
        <title>Structural basis for anion conduction in the calcium-activated chloride channel TMEM16A.</title>
        <authorList>
            <person name="Paulino C."/>
            <person name="Neldner Y."/>
            <person name="Lam A.K."/>
            <person name="Kalienkova V."/>
            <person name="Brunner J.D."/>
            <person name="Schenck S."/>
            <person name="Dutzler R."/>
        </authorList>
    </citation>
    <scope>STRUCTURE BY ELECTRON MICROSCOPY (6.60 ANGSTROMS)</scope>
    <scope>FUNCTION</scope>
    <scope>TRANSPORTER ACTIVITY</scope>
    <scope>SUBUNIT</scope>
    <scope>SUBCELLULAR LOCATION</scope>
    <scope>MUTAGENESIS OF ARG-515; ARG-535; LYS-588 AND LYS-645</scope>
</reference>
<reference evidence="34 35" key="29">
    <citation type="journal article" date="2017" name="Nature">
        <title>Activation mechanism of the calcium-activated chloride channel TMEM16A revealed by cryo-EM.</title>
        <authorList>
            <person name="Paulino C."/>
            <person name="Kalienkova V."/>
            <person name="Lam A.K.M."/>
            <person name="Neldner Y."/>
            <person name="Dutzler R."/>
        </authorList>
    </citation>
    <scope>STRUCTURE BY ELECTRON MICROSCOPY (3.75 ANGSTROMS) OF APOPROTEIN AND IN COMPLEX WITH CALCIUM</scope>
    <scope>FUNCTION</scope>
    <scope>TRANSPORTER ACTIVITY</scope>
    <scope>SUBUNIT</scope>
    <scope>SUBCELLULAR LOCATION</scope>
    <scope>TOPOLOGY</scope>
    <scope>DISULFIDE BONDS</scope>
    <scope>MUTAGENESIS OF ILE-550; TYR-593; GLY-644; ASN-651; GLY-656; PRO-658 AND ASN-730</scope>
</reference>
<reference evidence="36 37" key="30">
    <citation type="journal article" date="2017" name="Nature">
        <title>Cryo-EM structures of the TMEM16A calcium-activated chloride channel.</title>
        <authorList>
            <person name="Dang S."/>
            <person name="Feng S."/>
            <person name="Tien J."/>
            <person name="Peters C.J."/>
            <person name="Bulkley D."/>
            <person name="Lolicato M."/>
            <person name="Zhao J."/>
            <person name="Zuberbuhler K."/>
            <person name="Ye W."/>
            <person name="Qi L."/>
            <person name="Chen T."/>
            <person name="Craik C.S."/>
            <person name="Jan Y.N."/>
            <person name="Minor D.L. Jr."/>
            <person name="Cheng Y."/>
            <person name="Jan L.Y."/>
        </authorList>
    </citation>
    <scope>STRUCTURE BY ELECTRON MICROSCOPY (3.80 ANGSTROMS) OF 1-907 OF APOPROTEIN AND IN COMPLEX WITH CALCIUM</scope>
    <scope>FUNCTION</scope>
    <scope>TRANSPORTER ACTIVITY</scope>
    <scope>SUBCELLULAR LOCATION</scope>
    <scope>SUBUNIT</scope>
    <scope>TOPOLOGY</scope>
    <scope>MUTAGENESIS OF ASN-546; ASN-591; TYR-593; ILE-596; VAL-599; SER-639; LEU-643; GLU-654; GLN-709; PHE-712; PHE-716; ASP-784; TYR-791 AND HIS-807</scope>
</reference>
<protein>
    <recommendedName>
        <fullName>Anoctamin-1</fullName>
    </recommendedName>
    <alternativeName>
        <fullName>Transmembrane protein 16A</fullName>
    </alternativeName>
</protein>
<organism>
    <name type="scientific">Mus musculus</name>
    <name type="common">Mouse</name>
    <dbReference type="NCBI Taxonomy" id="10090"/>
    <lineage>
        <taxon>Eukaryota</taxon>
        <taxon>Metazoa</taxon>
        <taxon>Chordata</taxon>
        <taxon>Craniata</taxon>
        <taxon>Vertebrata</taxon>
        <taxon>Euteleostomi</taxon>
        <taxon>Mammalia</taxon>
        <taxon>Eutheria</taxon>
        <taxon>Euarchontoglires</taxon>
        <taxon>Glires</taxon>
        <taxon>Rodentia</taxon>
        <taxon>Myomorpha</taxon>
        <taxon>Muroidea</taxon>
        <taxon>Muridae</taxon>
        <taxon>Murinae</taxon>
        <taxon>Mus</taxon>
        <taxon>Mus</taxon>
    </lineage>
</organism>
<evidence type="ECO:0000250" key="1">
    <source>
        <dbReference type="UniProtKB" id="Q5XXA6"/>
    </source>
</evidence>
<evidence type="ECO:0000255" key="2"/>
<evidence type="ECO:0000256" key="3">
    <source>
        <dbReference type="SAM" id="MobiDB-lite"/>
    </source>
</evidence>
<evidence type="ECO:0000269" key="4">
    <source>
    </source>
</evidence>
<evidence type="ECO:0000269" key="5">
    <source>
    </source>
</evidence>
<evidence type="ECO:0000269" key="6">
    <source>
    </source>
</evidence>
<evidence type="ECO:0000269" key="7">
    <source>
    </source>
</evidence>
<evidence type="ECO:0000269" key="8">
    <source>
    </source>
</evidence>
<evidence type="ECO:0000269" key="9">
    <source>
    </source>
</evidence>
<evidence type="ECO:0000269" key="10">
    <source>
    </source>
</evidence>
<evidence type="ECO:0000269" key="11">
    <source>
    </source>
</evidence>
<evidence type="ECO:0000269" key="12">
    <source>
    </source>
</evidence>
<evidence type="ECO:0000269" key="13">
    <source>
    </source>
</evidence>
<evidence type="ECO:0000269" key="14">
    <source>
    </source>
</evidence>
<evidence type="ECO:0000269" key="15">
    <source>
    </source>
</evidence>
<evidence type="ECO:0000269" key="16">
    <source>
    </source>
</evidence>
<evidence type="ECO:0000269" key="17">
    <source>
    </source>
</evidence>
<evidence type="ECO:0000269" key="18">
    <source>
    </source>
</evidence>
<evidence type="ECO:0000269" key="19">
    <source>
    </source>
</evidence>
<evidence type="ECO:0000269" key="20">
    <source>
    </source>
</evidence>
<evidence type="ECO:0000269" key="21">
    <source>
    </source>
</evidence>
<evidence type="ECO:0000269" key="22">
    <source>
    </source>
</evidence>
<evidence type="ECO:0000269" key="23">
    <source>
    </source>
</evidence>
<evidence type="ECO:0000269" key="24">
    <source>
    </source>
</evidence>
<evidence type="ECO:0000269" key="25">
    <source>
    </source>
</evidence>
<evidence type="ECO:0000269" key="26">
    <source>
    </source>
</evidence>
<evidence type="ECO:0000269" key="27">
    <source>
    </source>
</evidence>
<evidence type="ECO:0000269" key="28">
    <source>
    </source>
</evidence>
<evidence type="ECO:0000269" key="29">
    <source>
    </source>
</evidence>
<evidence type="ECO:0000303" key="30">
    <source>
    </source>
</evidence>
<evidence type="ECO:0000305" key="31"/>
<evidence type="ECO:0000305" key="32">
    <source>
    </source>
</evidence>
<evidence type="ECO:0007744" key="33">
    <source>
        <dbReference type="PDB" id="5NL2"/>
    </source>
</evidence>
<evidence type="ECO:0007744" key="34">
    <source>
        <dbReference type="PDB" id="5OYB"/>
    </source>
</evidence>
<evidence type="ECO:0007744" key="35">
    <source>
        <dbReference type="PDB" id="5OYG"/>
    </source>
</evidence>
<evidence type="ECO:0007744" key="36">
    <source>
        <dbReference type="PDB" id="6BGI"/>
    </source>
</evidence>
<evidence type="ECO:0007744" key="37">
    <source>
        <dbReference type="PDB" id="6BGJ"/>
    </source>
</evidence>
<evidence type="ECO:0007829" key="38">
    <source>
        <dbReference type="PDB" id="7B5D"/>
    </source>
</evidence>
<evidence type="ECO:0007829" key="39">
    <source>
        <dbReference type="PDB" id="7ZK3"/>
    </source>
</evidence>
<evidence type="ECO:0007829" key="40">
    <source>
        <dbReference type="PDB" id="8QZC"/>
    </source>
</evidence>
<evidence type="ECO:0007829" key="41">
    <source>
        <dbReference type="PDB" id="8XLR"/>
    </source>
</evidence>
<feature type="chain" id="PRO_0000288436" description="Anoctamin-1">
    <location>
        <begin position="1"/>
        <end position="960"/>
    </location>
</feature>
<feature type="topological domain" description="Cytoplasmic" evidence="18 19">
    <location>
        <begin position="1"/>
        <end position="333"/>
    </location>
</feature>
<feature type="transmembrane region" description="Helical" evidence="18 19">
    <location>
        <begin position="334"/>
        <end position="354"/>
    </location>
</feature>
<feature type="topological domain" description="Extracellular" evidence="18 19">
    <location>
        <begin position="355"/>
        <end position="406"/>
    </location>
</feature>
<feature type="transmembrane region" description="Helical" evidence="18 19">
    <location>
        <begin position="407"/>
        <end position="427"/>
    </location>
</feature>
<feature type="topological domain" description="Cytoplasmic" evidence="18 19">
    <location>
        <begin position="428"/>
        <end position="493"/>
    </location>
</feature>
<feature type="transmembrane region" description="Helical" evidence="18 19">
    <location>
        <begin position="494"/>
        <end position="514"/>
    </location>
</feature>
<feature type="topological domain" description="Extracellular" evidence="18 19">
    <location>
        <begin position="515"/>
        <end position="542"/>
    </location>
</feature>
<feature type="transmembrane region" description="Helical" evidence="18 19">
    <location>
        <begin position="543"/>
        <end position="563"/>
    </location>
</feature>
<feature type="topological domain" description="Cytoplasmic" evidence="18 19">
    <location>
        <begin position="564"/>
        <end position="581"/>
    </location>
</feature>
<feature type="transmembrane region" description="Helical" evidence="18 19">
    <location>
        <begin position="582"/>
        <end position="602"/>
    </location>
</feature>
<feature type="topological domain" description="Extracellular" evidence="18 19">
    <location>
        <begin position="603"/>
        <end position="631"/>
    </location>
</feature>
<feature type="transmembrane region" description="Helical" evidence="18 19">
    <location>
        <begin position="632"/>
        <end position="652"/>
    </location>
</feature>
<feature type="topological domain" description="Cytoplasmic" evidence="18 19">
    <location>
        <begin position="653"/>
        <end position="699"/>
    </location>
</feature>
<feature type="transmembrane region" description="Helical" evidence="18 19">
    <location>
        <begin position="700"/>
        <end position="720"/>
    </location>
</feature>
<feature type="transmembrane region" description="Helical" evidence="18 19">
    <location>
        <begin position="721"/>
        <end position="741"/>
    </location>
</feature>
<feature type="topological domain" description="Cytoplasmic" evidence="18 19">
    <location>
        <begin position="742"/>
        <end position="758"/>
    </location>
</feature>
<feature type="transmembrane region" description="Helical" evidence="18 19">
    <location>
        <begin position="759"/>
        <end position="779"/>
    </location>
</feature>
<feature type="topological domain" description="Extracellular" evidence="18 19">
    <location>
        <begin position="780"/>
        <end position="866"/>
    </location>
</feature>
<feature type="transmembrane region" description="Helical" evidence="18 19">
    <location>
        <begin position="867"/>
        <end position="887"/>
    </location>
</feature>
<feature type="topological domain" description="Cytoplasmic" evidence="18 19">
    <location>
        <begin position="888"/>
        <end position="960"/>
    </location>
</feature>
<feature type="region of interest" description="Disordered" evidence="3">
    <location>
        <begin position="92"/>
        <end position="115"/>
    </location>
</feature>
<feature type="region of interest" description="Disordered" evidence="3">
    <location>
        <begin position="928"/>
        <end position="960"/>
    </location>
</feature>
<feature type="binding site" evidence="24">
    <location>
        <position position="425"/>
    </location>
    <ligand>
        <name>Ca(2+)</name>
        <dbReference type="ChEBI" id="CHEBI:29108"/>
        <label>3</label>
    </ligand>
</feature>
<feature type="binding site" evidence="32">
    <location>
        <position position="651"/>
    </location>
    <ligand>
        <name>Ca(2+)</name>
        <dbReference type="ChEBI" id="CHEBI:29108"/>
        <label>1</label>
    </ligand>
</feature>
<feature type="binding site" evidence="32">
    <location>
        <position position="654"/>
    </location>
    <ligand>
        <name>Ca(2+)</name>
        <dbReference type="ChEBI" id="CHEBI:29108"/>
        <label>2</label>
    </ligand>
</feature>
<feature type="binding site" evidence="32">
    <location>
        <position position="702"/>
    </location>
    <ligand>
        <name>Ca(2+)</name>
        <dbReference type="ChEBI" id="CHEBI:29108"/>
        <label>2</label>
    </ligand>
</feature>
<feature type="binding site" evidence="32">
    <location>
        <position position="705"/>
    </location>
    <ligand>
        <name>Ca(2+)</name>
        <dbReference type="ChEBI" id="CHEBI:29108"/>
        <label>1</label>
    </ligand>
</feature>
<feature type="binding site" evidence="32">
    <location>
        <position position="734"/>
    </location>
    <ligand>
        <name>Ca(2+)</name>
        <dbReference type="ChEBI" id="CHEBI:29108"/>
        <label>1</label>
    </ligand>
</feature>
<feature type="binding site" evidence="32">
    <location>
        <position position="738"/>
    </location>
    <ligand>
        <name>Ca(2+)</name>
        <dbReference type="ChEBI" id="CHEBI:29108"/>
        <label>2</label>
    </ligand>
</feature>
<feature type="binding site" evidence="24">
    <location>
        <position position="883"/>
    </location>
    <ligand>
        <name>Ca(2+)</name>
        <dbReference type="ChEBI" id="CHEBI:29108"/>
        <label>3</label>
    </ligand>
</feature>
<feature type="binding site" evidence="24">
    <location>
        <position position="888"/>
    </location>
    <ligand>
        <name>Ca(2+)</name>
        <dbReference type="ChEBI" id="CHEBI:29108"/>
        <label>3</label>
    </ligand>
</feature>
<feature type="site" description="Unlikely to bind calcium but may play an important structural role" evidence="24">
    <location>
        <position position="428"/>
    </location>
</feature>
<feature type="modified residue" description="Phosphoserine" evidence="1">
    <location>
        <position position="196"/>
    </location>
</feature>
<feature type="glycosylation site" description="N-linked (GlcNAc...) asparagine" evidence="2">
    <location>
        <position position="806"/>
    </location>
</feature>
<feature type="disulfide bond" evidence="19 34 35">
    <location>
        <begin position="370"/>
        <end position="395"/>
    </location>
</feature>
<feature type="disulfide bond" evidence="19 34 35">
    <location>
        <begin position="379"/>
        <end position="836"/>
    </location>
</feature>
<feature type="disulfide bond" evidence="19 34 35">
    <location>
        <begin position="382"/>
        <end position="386"/>
    </location>
</feature>
<feature type="disulfide bond" evidence="19 34 35">
    <location>
        <begin position="625"/>
        <end position="630"/>
    </location>
</feature>
<feature type="splice variant" id="VSP_025672" description="In isoform 2." evidence="30">
    <location>
        <begin position="448"/>
        <end position="451"/>
    </location>
</feature>
<feature type="mutagenesis site" description="Increased Ca(2+) sensitivity." evidence="24">
    <original>E</original>
    <variation>A</variation>
    <variation>K</variation>
    <location>
        <position position="425"/>
    </location>
</feature>
<feature type="mutagenesis site" description="Decreased Ca(2+) sensitivity." evidence="24">
    <original>K</original>
    <variation>A</variation>
    <variation>E</variation>
    <location>
        <position position="428"/>
    </location>
</feature>
<feature type="mutagenesis site" description="Decreased permeability to chloride ions." evidence="16">
    <original>R</original>
    <variation>A</variation>
    <location>
        <position position="515"/>
    </location>
</feature>
<feature type="mutagenesis site" description="Decreased permeability to chloride ions." evidence="16">
    <original>R</original>
    <variation>A</variation>
    <location>
        <position position="535"/>
    </location>
</feature>
<feature type="mutagenesis site" description="Decreased threshold for activation by calcium." evidence="18">
    <original>N</original>
    <variation>D</variation>
    <location>
        <position position="546"/>
    </location>
</feature>
<feature type="mutagenesis site" description="Low constitutive channel activity. Decreased threshold for activation by calcium." evidence="18 19">
    <original>I</original>
    <variation>A</variation>
    <location>
        <position position="550"/>
    </location>
</feature>
<feature type="mutagenesis site" description="Induces phospholipid scramblase activity." evidence="29">
    <original>I</original>
    <variation>K</variation>
    <location>
        <position position="550"/>
    </location>
</feature>
<feature type="mutagenesis site" description="Induces phospholipid scramblase activity." evidence="29">
    <original>I</original>
    <variation>K</variation>
    <location>
        <position position="551"/>
    </location>
</feature>
<feature type="mutagenesis site" description="Induces phospholipid scramblase activity." evidence="29">
    <original>E</original>
    <variation>K</variation>
    <location>
        <position position="555"/>
    </location>
</feature>
<feature type="mutagenesis site" description="Decreased permeability to chloride ions." evidence="11 16">
    <original>K</original>
    <variation>A</variation>
    <variation>Q</variation>
    <location>
        <position position="588"/>
    </location>
</feature>
<feature type="mutagenesis site" description="Increased permeability to chloride ions." evidence="18">
    <original>N</original>
    <variation>A</variation>
    <location>
        <position position="591"/>
    </location>
</feature>
<feature type="mutagenesis site" description="Decreased threshold for activation by calcium." evidence="18">
    <original>Y</original>
    <variation>D</variation>
    <location>
        <position position="593"/>
    </location>
</feature>
<feature type="mutagenesis site" description="Decreased threshold for activation by calcium." evidence="18">
    <original>I</original>
    <variation>A</variation>
    <location>
        <position position="596"/>
    </location>
</feature>
<feature type="mutagenesis site" description="Increased threshold for activation by calcium. Increased permeability to chloride ions." evidence="18">
    <original>V</original>
    <variation>A</variation>
    <location>
        <position position="599"/>
    </location>
</feature>
<feature type="mutagenesis site" description="Increased permeability to chloride ions." evidence="18">
    <original>V</original>
    <variation>K</variation>
    <variation>L</variation>
    <variation>R</variation>
    <location>
        <position position="599"/>
    </location>
</feature>
<feature type="mutagenesis site" description="Reduced anion permeability and increased cation permeability." evidence="5">
    <original>R</original>
    <variation>E</variation>
    <location>
        <position position="621"/>
    </location>
</feature>
<feature type="mutagenesis site" description="No effect of cysteine-modifying agent MTSET on ion permeability in contrast to wild-type where MTSET blocks current." evidence="5">
    <original>C</original>
    <variation>A</variation>
    <location>
        <position position="625"/>
    </location>
</feature>
<feature type="mutagenesis site" description="No effect of cysteine-modifying agent MTSET on ion permeability in contrast to wild-type where MTSET blocks current." evidence="5">
    <original>C</original>
    <variation>A</variation>
    <location>
        <position position="630"/>
    </location>
</feature>
<feature type="mutagenesis site" description="No effect of cysteine-modifying agent MTSET on ion permeability in contrast to wild-type where MTSET blocks current." evidence="5">
    <original>C</original>
    <variation>A</variation>
    <location>
        <position position="635"/>
    </location>
</feature>
<feature type="mutagenesis site" description="Decreased permeability to chloride ions." evidence="18">
    <original>S</original>
    <variation>A</variation>
    <location>
        <position position="639"/>
    </location>
</feature>
<feature type="mutagenesis site" description="Increased threshold for activation by calcium." evidence="18">
    <original>L</original>
    <variation>A</variation>
    <location>
        <position position="643"/>
    </location>
</feature>
<feature type="mutagenesis site" description="Decreased threshold for activation by calcium." evidence="19">
    <original>G</original>
    <variation>A</variation>
    <location>
        <position position="644"/>
    </location>
</feature>
<feature type="mutagenesis site" description="Low constitutive channel activity. Decreased threshold for activation by calcium." evidence="19">
    <original>G</original>
    <variation>P</variation>
    <location>
        <position position="644"/>
    </location>
</feature>
<feature type="mutagenesis site" description="Decreased permeability to chloride ions." evidence="16">
    <original>K</original>
    <variation>A</variation>
    <location>
        <position position="645"/>
    </location>
</feature>
<feature type="mutagenesis site" description="Reduced anion permeability and increased cation permeability." evidence="5">
    <original>K</original>
    <variation>E</variation>
    <location>
        <position position="645"/>
    </location>
</feature>
<feature type="mutagenesis site" description="Strongly increased threshold for activation by calcium." evidence="19">
    <original>N</original>
    <variation>A</variation>
    <location>
        <position position="651"/>
    </location>
</feature>
<feature type="mutagenesis site" description="Strongly increased threshold for activation by calcium." evidence="18">
    <original>E</original>
    <variation>A</variation>
    <location>
        <position position="654"/>
    </location>
</feature>
<feature type="mutagenesis site" description="No effect on threshold for activation by calcium." evidence="19">
    <original>G</original>
    <variation>A</variation>
    <variation>P</variation>
    <location>
        <position position="656"/>
    </location>
</feature>
<feature type="mutagenesis site" description="Moderately increased threshold for activation by calcium." evidence="19">
    <original>P</original>
    <variation>A</variation>
    <variation>G</variation>
    <location>
        <position position="658"/>
    </location>
</feature>
<feature type="mutagenesis site" description="Reduced anion permeability and increased cation permeability." evidence="5">
    <original>K</original>
    <variation>E</variation>
    <location>
        <position position="668"/>
    </location>
</feature>
<feature type="mutagenesis site" description="Increased permeability to chloride ions." evidence="18">
    <original>Q</original>
    <variation>A</variation>
    <location>
        <position position="709"/>
    </location>
</feature>
<feature type="mutagenesis site" description="Decreased threshold for activation by calcium." evidence="18">
    <original>F</original>
    <variation>A</variation>
    <location>
        <position position="712"/>
    </location>
</feature>
<feature type="mutagenesis site" description="Increased permeability to chloride ions." evidence="18">
    <original>F</original>
    <variation>A</variation>
    <location>
        <position position="716"/>
    </location>
</feature>
<feature type="mutagenesis site" description="Strongly increased threshold for activation by calcium." evidence="19">
    <original>N</original>
    <variation>A</variation>
    <location>
        <position position="730"/>
    </location>
</feature>
<feature type="mutagenesis site" description="Increased permeability to chloride ions." evidence="18">
    <original>D</original>
    <variation>A</variation>
    <location>
        <position position="784"/>
    </location>
</feature>
<feature type="mutagenesis site" description="Increased permeability to chloride ions." evidence="18">
    <original>Y</original>
    <variation>A</variation>
    <location>
        <position position="791"/>
    </location>
</feature>
<feature type="mutagenesis site" description="Increased permeability to chloride ions." evidence="18">
    <original>H</original>
    <variation>A</variation>
    <location>
        <position position="807"/>
    </location>
</feature>
<feature type="mutagenesis site" description="Increased Ca(2+) sensitivity." evidence="24">
    <original>D</original>
    <variation>A</variation>
    <variation>K</variation>
    <location>
        <position position="883"/>
    </location>
</feature>
<feature type="mutagenesis site" description="Decreased Ca(2+) sensitivity." evidence="24">
    <original>D</original>
    <variation>A</variation>
    <variation>K</variation>
    <variation>N</variation>
    <location>
        <position position="888"/>
    </location>
</feature>
<feature type="turn" evidence="41">
    <location>
        <begin position="48"/>
        <end position="53"/>
    </location>
</feature>
<feature type="strand" evidence="41">
    <location>
        <begin position="56"/>
        <end position="58"/>
    </location>
</feature>
<feature type="strand" evidence="41">
    <location>
        <begin position="64"/>
        <end position="68"/>
    </location>
</feature>
<feature type="strand" evidence="39">
    <location>
        <begin position="123"/>
        <end position="126"/>
    </location>
</feature>
<feature type="strand" evidence="41">
    <location>
        <begin position="141"/>
        <end position="145"/>
    </location>
</feature>
<feature type="strand" evidence="41">
    <location>
        <begin position="154"/>
        <end position="159"/>
    </location>
</feature>
<feature type="helix" evidence="39">
    <location>
        <begin position="166"/>
        <end position="179"/>
    </location>
</feature>
<feature type="turn" evidence="39">
    <location>
        <begin position="180"/>
        <end position="183"/>
    </location>
</feature>
<feature type="strand" evidence="39">
    <location>
        <begin position="185"/>
        <end position="189"/>
    </location>
</feature>
<feature type="strand" evidence="39">
    <location>
        <begin position="192"/>
        <end position="194"/>
    </location>
</feature>
<feature type="strand" evidence="39">
    <location>
        <begin position="196"/>
        <end position="200"/>
    </location>
</feature>
<feature type="helix" evidence="39">
    <location>
        <begin position="205"/>
        <end position="210"/>
    </location>
</feature>
<feature type="strand" evidence="41">
    <location>
        <begin position="216"/>
        <end position="223"/>
    </location>
</feature>
<feature type="strand" evidence="39">
    <location>
        <begin position="229"/>
        <end position="233"/>
    </location>
</feature>
<feature type="helix" evidence="41">
    <location>
        <begin position="238"/>
        <end position="240"/>
    </location>
</feature>
<feature type="helix" evidence="39">
    <location>
        <begin position="243"/>
        <end position="256"/>
    </location>
</feature>
<feature type="strand" evidence="41">
    <location>
        <begin position="260"/>
        <end position="264"/>
    </location>
</feature>
<feature type="helix" evidence="39">
    <location>
        <begin position="268"/>
        <end position="274"/>
    </location>
</feature>
<feature type="strand" evidence="39">
    <location>
        <begin position="279"/>
        <end position="281"/>
    </location>
</feature>
<feature type="helix" evidence="39">
    <location>
        <begin position="297"/>
        <end position="304"/>
    </location>
</feature>
<feature type="helix" evidence="39">
    <location>
        <begin position="308"/>
        <end position="310"/>
    </location>
</feature>
<feature type="helix" evidence="39">
    <location>
        <begin position="317"/>
        <end position="324"/>
    </location>
</feature>
<feature type="helix" evidence="39">
    <location>
        <begin position="326"/>
        <end position="359"/>
    </location>
</feature>
<feature type="helix" evidence="39">
    <location>
        <begin position="360"/>
        <end position="362"/>
    </location>
</feature>
<feature type="helix" evidence="39">
    <location>
        <begin position="364"/>
        <end position="370"/>
    </location>
</feature>
<feature type="strand" evidence="39">
    <location>
        <begin position="372"/>
        <end position="374"/>
    </location>
</feature>
<feature type="strand" evidence="39">
    <location>
        <begin position="381"/>
        <end position="386"/>
    </location>
</feature>
<feature type="helix" evidence="39">
    <location>
        <begin position="391"/>
        <end position="394"/>
    </location>
</feature>
<feature type="helix" evidence="39">
    <location>
        <begin position="395"/>
        <end position="402"/>
    </location>
</feature>
<feature type="helix" evidence="39">
    <location>
        <begin position="407"/>
        <end position="438"/>
    </location>
</feature>
<feature type="helix" evidence="39">
    <location>
        <begin position="453"/>
        <end position="465"/>
    </location>
</feature>
<feature type="helix" evidence="39">
    <location>
        <begin position="487"/>
        <end position="524"/>
    </location>
</feature>
<feature type="helix" evidence="39">
    <location>
        <begin position="529"/>
        <end position="532"/>
    </location>
</feature>
<feature type="helix" evidence="39">
    <location>
        <begin position="534"/>
        <end position="568"/>
    </location>
</feature>
<feature type="helix" evidence="39">
    <location>
        <begin position="573"/>
        <end position="601"/>
    </location>
</feature>
<feature type="strand" evidence="39">
    <location>
        <begin position="603"/>
        <end position="606"/>
    </location>
</feature>
<feature type="strand" evidence="38">
    <location>
        <begin position="610"/>
        <end position="612"/>
    </location>
</feature>
<feature type="turn" evidence="39">
    <location>
        <begin position="617"/>
        <end position="619"/>
    </location>
</feature>
<feature type="helix" evidence="39">
    <location>
        <begin position="630"/>
        <end position="643"/>
    </location>
</feature>
<feature type="helix" evidence="39">
    <location>
        <begin position="644"/>
        <end position="648"/>
    </location>
</feature>
<feature type="helix" evidence="39">
    <location>
        <begin position="649"/>
        <end position="667"/>
    </location>
</feature>
<feature type="helix" evidence="39">
    <location>
        <begin position="686"/>
        <end position="692"/>
    </location>
</feature>
<feature type="helix" evidence="39">
    <location>
        <begin position="700"/>
        <end position="715"/>
    </location>
</feature>
<feature type="strand" evidence="40">
    <location>
        <begin position="716"/>
        <end position="719"/>
    </location>
</feature>
<feature type="helix" evidence="39">
    <location>
        <begin position="723"/>
        <end position="744"/>
    </location>
</feature>
<feature type="helix" evidence="39">
    <location>
        <begin position="759"/>
        <end position="781"/>
    </location>
</feature>
<feature type="strand" evidence="39">
    <location>
        <begin position="782"/>
        <end position="784"/>
    </location>
</feature>
<feature type="helix" evidence="39">
    <location>
        <begin position="785"/>
        <end position="794"/>
    </location>
</feature>
<feature type="strand" evidence="39">
    <location>
        <begin position="797"/>
        <end position="801"/>
    </location>
</feature>
<feature type="helix" evidence="39">
    <location>
        <begin position="804"/>
        <end position="808"/>
    </location>
</feature>
<feature type="strand" evidence="39">
    <location>
        <begin position="810"/>
        <end position="813"/>
    </location>
</feature>
<feature type="helix" evidence="39">
    <location>
        <begin position="814"/>
        <end position="816"/>
    </location>
</feature>
<feature type="strand" evidence="40">
    <location>
        <begin position="818"/>
        <end position="820"/>
    </location>
</feature>
<feature type="strand" evidence="39">
    <location>
        <begin position="829"/>
        <end position="831"/>
    </location>
</feature>
<feature type="strand" evidence="39">
    <location>
        <begin position="834"/>
        <end position="838"/>
    </location>
</feature>
<feature type="turn" evidence="39">
    <location>
        <begin position="848"/>
        <end position="851"/>
    </location>
</feature>
<feature type="helix" evidence="39">
    <location>
        <begin position="855"/>
        <end position="885"/>
    </location>
</feature>
<feature type="helix" evidence="39">
    <location>
        <begin position="891"/>
        <end position="909"/>
    </location>
</feature>
<accession>Q8BHY3</accession>
<accession>Q6P5C6</accession>
<accession>Q8BI26</accession>
<accession>Q99JK1</accession>
<keyword id="KW-0002">3D-structure</keyword>
<keyword id="KW-0025">Alternative splicing</keyword>
<keyword id="KW-0106">Calcium</keyword>
<keyword id="KW-1003">Cell membrane</keyword>
<keyword id="KW-0966">Cell projection</keyword>
<keyword id="KW-0868">Chloride</keyword>
<keyword id="KW-0869">Chloride channel</keyword>
<keyword id="KW-0217">Developmental protein</keyword>
<keyword id="KW-1015">Disulfide bond</keyword>
<keyword id="KW-0325">Glycoprotein</keyword>
<keyword id="KW-0407">Ion channel</keyword>
<keyword id="KW-0406">Ion transport</keyword>
<keyword id="KW-0472">Membrane</keyword>
<keyword id="KW-0479">Metal-binding</keyword>
<keyword id="KW-0597">Phosphoprotein</keyword>
<keyword id="KW-1185">Reference proteome</keyword>
<keyword id="KW-0770">Synapse</keyword>
<keyword id="KW-0812">Transmembrane</keyword>
<keyword id="KW-1133">Transmembrane helix</keyword>
<keyword id="KW-0813">Transport</keyword>
<dbReference type="EMBL" id="AK028991">
    <property type="protein sequence ID" value="BAC26230.1"/>
    <property type="status" value="ALT_INIT"/>
    <property type="molecule type" value="mRNA"/>
</dbReference>
<dbReference type="EMBL" id="AK029329">
    <property type="protein sequence ID" value="BAC26398.1"/>
    <property type="status" value="ALT_INIT"/>
    <property type="molecule type" value="mRNA"/>
</dbReference>
<dbReference type="EMBL" id="AK052589">
    <property type="protein sequence ID" value="BAC35051.1"/>
    <property type="status" value="ALT_SEQ"/>
    <property type="molecule type" value="mRNA"/>
</dbReference>
<dbReference type="EMBL" id="BC006062">
    <property type="protein sequence ID" value="AAH06062.1"/>
    <property type="status" value="ALT_INIT"/>
    <property type="molecule type" value="mRNA"/>
</dbReference>
<dbReference type="EMBL" id="BC062959">
    <property type="protein sequence ID" value="AAH62959.1"/>
    <property type="molecule type" value="mRNA"/>
</dbReference>
<dbReference type="CCDS" id="CCDS40202.2">
    <molecule id="Q8BHY3-1"/>
</dbReference>
<dbReference type="CCDS" id="CCDS57600.1">
    <molecule id="Q8BHY3-2"/>
</dbReference>
<dbReference type="RefSeq" id="NP_001229278.2">
    <molecule id="Q8BHY3-2"/>
    <property type="nucleotide sequence ID" value="NM_001242349.2"/>
</dbReference>
<dbReference type="RefSeq" id="NP_848757.4">
    <molecule id="Q8BHY3-1"/>
    <property type="nucleotide sequence ID" value="NM_178642.5"/>
</dbReference>
<dbReference type="PDB" id="5NL2">
    <property type="method" value="EM"/>
    <property type="resolution" value="6.60 A"/>
    <property type="chains" value="A/B=1-960"/>
</dbReference>
<dbReference type="PDB" id="5OYB">
    <property type="method" value="EM"/>
    <property type="resolution" value="3.75 A"/>
    <property type="chains" value="A/B=1-960"/>
</dbReference>
<dbReference type="PDB" id="5OYG">
    <property type="method" value="EM"/>
    <property type="resolution" value="4.06 A"/>
    <property type="chains" value="A/B=1-960"/>
</dbReference>
<dbReference type="PDB" id="6BGI">
    <property type="method" value="EM"/>
    <property type="resolution" value="3.80 A"/>
    <property type="chains" value="A/B=1-907"/>
</dbReference>
<dbReference type="PDB" id="6BGJ">
    <property type="method" value="EM"/>
    <property type="resolution" value="3.80 A"/>
    <property type="chains" value="A/B=1-907"/>
</dbReference>
<dbReference type="PDB" id="7B5C">
    <property type="method" value="EM"/>
    <property type="resolution" value="3.70 A"/>
    <property type="chains" value="A/B=1-960"/>
</dbReference>
<dbReference type="PDB" id="7B5D">
    <property type="method" value="EM"/>
    <property type="resolution" value="3.30 A"/>
    <property type="chains" value="A/B=1-960"/>
</dbReference>
<dbReference type="PDB" id="7B5E">
    <property type="method" value="EM"/>
    <property type="resolution" value="4.10 A"/>
    <property type="chains" value="A/B=1-960"/>
</dbReference>
<dbReference type="PDB" id="7ZK3">
    <property type="method" value="EM"/>
    <property type="resolution" value="2.85 A"/>
    <property type="chains" value="A/B=1-960"/>
</dbReference>
<dbReference type="PDB" id="8QZC">
    <property type="method" value="EM"/>
    <property type="resolution" value="3.29 A"/>
    <property type="chains" value="A/B=1-960"/>
</dbReference>
<dbReference type="PDB" id="8XLR">
    <property type="method" value="EM"/>
    <property type="resolution" value="2.93 A"/>
    <property type="chains" value="A/B=1-960"/>
</dbReference>
<dbReference type="PDBsum" id="5NL2"/>
<dbReference type="PDBsum" id="5OYB"/>
<dbReference type="PDBsum" id="5OYG"/>
<dbReference type="PDBsum" id="6BGI"/>
<dbReference type="PDBsum" id="6BGJ"/>
<dbReference type="PDBsum" id="7B5C"/>
<dbReference type="PDBsum" id="7B5D"/>
<dbReference type="PDBsum" id="7B5E"/>
<dbReference type="PDBsum" id="7ZK3"/>
<dbReference type="PDBsum" id="8QZC"/>
<dbReference type="PDBsum" id="8XLR"/>
<dbReference type="EMDB" id="EMD-12025"/>
<dbReference type="EMDB" id="EMD-12026"/>
<dbReference type="EMDB" id="EMD-12027"/>
<dbReference type="EMDB" id="EMD-14753"/>
<dbReference type="EMDB" id="EMD-18774"/>
<dbReference type="EMDB" id="EMD-3658"/>
<dbReference type="EMDB" id="EMD-38456"/>
<dbReference type="EMDB" id="EMD-3860"/>
<dbReference type="EMDB" id="EMD-3861"/>
<dbReference type="EMDB" id="EMD-7095"/>
<dbReference type="EMDB" id="EMD-7096"/>
<dbReference type="SMR" id="Q8BHY3"/>
<dbReference type="FunCoup" id="Q8BHY3">
    <property type="interactions" value="350"/>
</dbReference>
<dbReference type="IntAct" id="Q8BHY3">
    <property type="interactions" value="1"/>
</dbReference>
<dbReference type="STRING" id="10090.ENSMUSP00000112616"/>
<dbReference type="BindingDB" id="Q8BHY3"/>
<dbReference type="ChEMBL" id="CHEMBL4105874"/>
<dbReference type="TCDB" id="1.A.17.1.25">
    <property type="family name" value="the calcium-dependent chloride channel (ca-clc) family"/>
</dbReference>
<dbReference type="GlyCosmos" id="Q8BHY3">
    <property type="glycosylation" value="1 site, No reported glycans"/>
</dbReference>
<dbReference type="GlyGen" id="Q8BHY3">
    <property type="glycosylation" value="1 site"/>
</dbReference>
<dbReference type="iPTMnet" id="Q8BHY3"/>
<dbReference type="PhosphoSitePlus" id="Q8BHY3"/>
<dbReference type="jPOST" id="Q8BHY3"/>
<dbReference type="PaxDb" id="10090-ENSMUSP00000112616"/>
<dbReference type="ProteomicsDB" id="296309">
    <molecule id="Q8BHY3-1"/>
</dbReference>
<dbReference type="ProteomicsDB" id="296310">
    <molecule id="Q8BHY3-2"/>
</dbReference>
<dbReference type="Antibodypedia" id="30667">
    <property type="antibodies" value="1446 antibodies from 40 providers"/>
</dbReference>
<dbReference type="DNASU" id="101772"/>
<dbReference type="Ensembl" id="ENSMUST00000033393.15">
    <molecule id="Q8BHY3-2"/>
    <property type="protein sequence ID" value="ENSMUSP00000033393.9"/>
    <property type="gene ID" value="ENSMUSG00000031075.20"/>
</dbReference>
<dbReference type="Ensembl" id="ENSMUST00000118556.9">
    <molecule id="Q8BHY3-2"/>
    <property type="protein sequence ID" value="ENSMUSP00000113899.4"/>
    <property type="gene ID" value="ENSMUSG00000031075.20"/>
</dbReference>
<dbReference type="Ensembl" id="ENSMUST00000121758.8">
    <molecule id="Q8BHY3-1"/>
    <property type="protein sequence ID" value="ENSMUSP00000112616.4"/>
    <property type="gene ID" value="ENSMUSG00000031075.20"/>
</dbReference>
<dbReference type="GeneID" id="101772"/>
<dbReference type="KEGG" id="mmu:101772"/>
<dbReference type="AGR" id="MGI:2142149"/>
<dbReference type="CTD" id="55107"/>
<dbReference type="MGI" id="MGI:2142149">
    <property type="gene designation" value="Ano1"/>
</dbReference>
<dbReference type="VEuPathDB" id="HostDB:ENSMUSG00000031075"/>
<dbReference type="eggNOG" id="KOG2514">
    <property type="taxonomic scope" value="Eukaryota"/>
</dbReference>
<dbReference type="GeneTree" id="ENSGT00940000157182"/>
<dbReference type="HOGENOM" id="CLU_006685_1_2_1"/>
<dbReference type="InParanoid" id="Q8BHY3"/>
<dbReference type="OrthoDB" id="296386at2759"/>
<dbReference type="PhylomeDB" id="Q8BHY3"/>
<dbReference type="Reactome" id="R-MMU-2672351">
    <property type="pathway name" value="Stimuli-sensing channels"/>
</dbReference>
<dbReference type="BioGRID-ORCS" id="101772">
    <property type="hits" value="2 hits in 74 CRISPR screens"/>
</dbReference>
<dbReference type="ChiTaRS" id="Ano1">
    <property type="organism name" value="mouse"/>
</dbReference>
<dbReference type="PRO" id="PR:Q8BHY3"/>
<dbReference type="Proteomes" id="UP000000589">
    <property type="component" value="Chromosome 7"/>
</dbReference>
<dbReference type="RNAct" id="Q8BHY3">
    <property type="molecule type" value="protein"/>
</dbReference>
<dbReference type="Bgee" id="ENSMUSG00000031075">
    <property type="expression patterns" value="Expressed in parotid gland and 286 other cell types or tissues"/>
</dbReference>
<dbReference type="ExpressionAtlas" id="Q8BHY3">
    <property type="expression patterns" value="baseline and differential"/>
</dbReference>
<dbReference type="GO" id="GO:0016324">
    <property type="term" value="C:apical plasma membrane"/>
    <property type="evidence" value="ECO:0000314"/>
    <property type="project" value="MGI"/>
</dbReference>
<dbReference type="GO" id="GO:0042995">
    <property type="term" value="C:cell projection"/>
    <property type="evidence" value="ECO:0007669"/>
    <property type="project" value="UniProtKB-KW"/>
</dbReference>
<dbReference type="GO" id="GO:0034707">
    <property type="term" value="C:chloride channel complex"/>
    <property type="evidence" value="ECO:0007669"/>
    <property type="project" value="UniProtKB-KW"/>
</dbReference>
<dbReference type="GO" id="GO:0009897">
    <property type="term" value="C:external side of plasma membrane"/>
    <property type="evidence" value="ECO:0000314"/>
    <property type="project" value="MGI"/>
</dbReference>
<dbReference type="GO" id="GO:0098978">
    <property type="term" value="C:glutamatergic synapse"/>
    <property type="evidence" value="ECO:0000314"/>
    <property type="project" value="SynGO"/>
</dbReference>
<dbReference type="GO" id="GO:0005886">
    <property type="term" value="C:plasma membrane"/>
    <property type="evidence" value="ECO:0000314"/>
    <property type="project" value="UniProtKB"/>
</dbReference>
<dbReference type="GO" id="GO:0042734">
    <property type="term" value="C:presynaptic membrane"/>
    <property type="evidence" value="ECO:0000314"/>
    <property type="project" value="SynGO"/>
</dbReference>
<dbReference type="GO" id="GO:0005254">
    <property type="term" value="F:chloride channel activity"/>
    <property type="evidence" value="ECO:0000314"/>
    <property type="project" value="UniProtKB"/>
</dbReference>
<dbReference type="GO" id="GO:0042802">
    <property type="term" value="F:identical protein binding"/>
    <property type="evidence" value="ECO:0000353"/>
    <property type="project" value="IntAct"/>
</dbReference>
<dbReference type="GO" id="GO:0005229">
    <property type="term" value="F:intracellularly calcium-gated chloride channel activity"/>
    <property type="evidence" value="ECO:0000314"/>
    <property type="project" value="UniProtKB"/>
</dbReference>
<dbReference type="GO" id="GO:0046872">
    <property type="term" value="F:metal ion binding"/>
    <property type="evidence" value="ECO:0007669"/>
    <property type="project" value="UniProtKB-KW"/>
</dbReference>
<dbReference type="GO" id="GO:0042803">
    <property type="term" value="F:protein homodimerization activity"/>
    <property type="evidence" value="ECO:0000314"/>
    <property type="project" value="UniProtKB"/>
</dbReference>
<dbReference type="GO" id="GO:0005247">
    <property type="term" value="F:voltage-gated chloride channel activity"/>
    <property type="evidence" value="ECO:0000314"/>
    <property type="project" value="UniProtKB"/>
</dbReference>
<dbReference type="GO" id="GO:0034605">
    <property type="term" value="P:cellular response to heat"/>
    <property type="evidence" value="ECO:0000314"/>
    <property type="project" value="UniProtKB"/>
</dbReference>
<dbReference type="GO" id="GO:1902476">
    <property type="term" value="P:chloride transmembrane transport"/>
    <property type="evidence" value="ECO:0000314"/>
    <property type="project" value="UniProtKB"/>
</dbReference>
<dbReference type="GO" id="GO:0006821">
    <property type="term" value="P:chloride transport"/>
    <property type="evidence" value="ECO:0000314"/>
    <property type="project" value="UniProtKB"/>
</dbReference>
<dbReference type="GO" id="GO:0050965">
    <property type="term" value="P:detection of temperature stimulus involved in sensory perception of pain"/>
    <property type="evidence" value="ECO:0000315"/>
    <property type="project" value="UniProtKB"/>
</dbReference>
<dbReference type="GO" id="GO:0051649">
    <property type="term" value="P:establishment of localization in cell"/>
    <property type="evidence" value="ECO:0000314"/>
    <property type="project" value="MGI"/>
</dbReference>
<dbReference type="GO" id="GO:0106091">
    <property type="term" value="P:glial cell projection elongation"/>
    <property type="evidence" value="ECO:0000315"/>
    <property type="project" value="UniProtKB"/>
</dbReference>
<dbReference type="GO" id="GO:0070254">
    <property type="term" value="P:mucus secretion"/>
    <property type="evidence" value="ECO:0000315"/>
    <property type="project" value="UniProtKB"/>
</dbReference>
<dbReference type="GO" id="GO:0007200">
    <property type="term" value="P:phospholipase C-activating G protein-coupled receptor signaling pathway"/>
    <property type="evidence" value="ECO:0000314"/>
    <property type="project" value="UniProtKB"/>
</dbReference>
<dbReference type="GO" id="GO:0035774">
    <property type="term" value="P:positive regulation of insulin secretion involved in cellular response to glucose stimulus"/>
    <property type="evidence" value="ECO:0000315"/>
    <property type="project" value="UniProtKB"/>
</dbReference>
<dbReference type="GO" id="GO:0042391">
    <property type="term" value="P:regulation of membrane potential"/>
    <property type="evidence" value="ECO:0000315"/>
    <property type="project" value="MGI"/>
</dbReference>
<dbReference type="GO" id="GO:0060438">
    <property type="term" value="P:trachea development"/>
    <property type="evidence" value="ECO:0000315"/>
    <property type="project" value="UniProtKB"/>
</dbReference>
<dbReference type="InterPro" id="IPR032394">
    <property type="entry name" value="Anoct_dimer"/>
</dbReference>
<dbReference type="InterPro" id="IPR007632">
    <property type="entry name" value="Anoctamin"/>
</dbReference>
<dbReference type="InterPro" id="IPR049452">
    <property type="entry name" value="Anoctamin_TM"/>
</dbReference>
<dbReference type="PANTHER" id="PTHR12308">
    <property type="entry name" value="ANOCTAMIN"/>
    <property type="match status" value="1"/>
</dbReference>
<dbReference type="PANTHER" id="PTHR12308:SF13">
    <property type="entry name" value="ANOCTAMIN-1"/>
    <property type="match status" value="1"/>
</dbReference>
<dbReference type="Pfam" id="PF16178">
    <property type="entry name" value="Anoct_dimer"/>
    <property type="match status" value="1"/>
</dbReference>
<dbReference type="Pfam" id="PF04547">
    <property type="entry name" value="Anoctamin"/>
    <property type="match status" value="1"/>
</dbReference>
<sequence>MRVPEKYSTLPAEDRSVHIVNICAIEDLGYLPSEGTLLNSLSVDPDAECKYGLYFRDGKRKVDYILVYHHKRASGSRTLARRGLQNDMVLGTRSVRQDQPLPGKGSPVDAGSPEVPMDYHEDDKRFRREEYEGNLLEAGLELENDEDTKIHGVGFVKIHAPWHVLCREAEFLKLKMPTKKVYHISETRGLLKTINSVLQKITDPIQPKVAEHRPQTTKRLSYPFSREKQHLFDLTDRDSFFDSKTRSTIVYEILKRTTCTKAKYSMGITSLLANGVYSAAYPLHDGDYEGDNVEFNDRKLLYEEWASYGVFYKYQPIDLVRKYFGEKVGLYFAWLGAYTQMLIPASIVGVIVFLYGCATVDENIPSMEMCDQRYNITMCPLCDKTCSYWKMSSACATARASHLFDNPATVFFSVFMALWAATFMEHWKRKQMRLNYRWDLTGFEEEEEAVKDHPRAEYEARVLEKSLRKESRNKETDKVKLTWRDRFPAYFTNLVSIIFMIAVTFAIVLGVIIYRISTAAALAMNSSPSVRSNIRVTVTATAVIINLVVIILLDEVYGCIARWLTKIEVPKTEKSFEERLTFKAFLLKFVNSYTPIFYVAFFKGRFVGRPGDYVYIFRSFRMEECAPGGCLMELCIQLSIIMLGKQLIQNNLFEIGIPKMKKFIRYLKLRRQSPSDREEYVKRKQRYEVDFNLEPFAGLTPEYMEMIIQFGFVTLFVASFPLAPLFALLNNIIEIRLDAKKFVTELRRPVAIRAKDIGIWYNILRGVGKLAVIINAFVISFTSDFIPRLVYLYMYSQNGTMHGFVNHTLSSFNVSDFQNGTAPNDPLDLGYEVQICRYKDYREPPWSEHKYDISKDFWAVLAARLAFVIVFQNLVMFMSDFVDWVIPDIPKDISQQIHKEKVLMVELFMREEQGKQQLLDTWMEKEKPRDVPCNNHSPTTHPEAGDGSPVPSYEYHGDAL</sequence>